<accession>A0K5D7</accession>
<organism>
    <name type="scientific">Burkholderia cenocepacia (strain HI2424)</name>
    <dbReference type="NCBI Taxonomy" id="331272"/>
    <lineage>
        <taxon>Bacteria</taxon>
        <taxon>Pseudomonadati</taxon>
        <taxon>Pseudomonadota</taxon>
        <taxon>Betaproteobacteria</taxon>
        <taxon>Burkholderiales</taxon>
        <taxon>Burkholderiaceae</taxon>
        <taxon>Burkholderia</taxon>
        <taxon>Burkholderia cepacia complex</taxon>
    </lineage>
</organism>
<protein>
    <recommendedName>
        <fullName evidence="1">Glutamate-1-semialdehyde 2,1-aminomutase</fullName>
        <shortName evidence="1">GSA</shortName>
        <ecNumber evidence="1">5.4.3.8</ecNumber>
    </recommendedName>
    <alternativeName>
        <fullName evidence="1">Glutamate-1-semialdehyde aminotransferase</fullName>
        <shortName evidence="1">GSA-AT</shortName>
    </alternativeName>
</protein>
<name>GSA_BURCH</name>
<reference key="1">
    <citation type="submission" date="2006-08" db="EMBL/GenBank/DDBJ databases">
        <title>Complete sequence of chromosome 1 of Burkholderia cenocepacia HI2424.</title>
        <authorList>
            <person name="Copeland A."/>
            <person name="Lucas S."/>
            <person name="Lapidus A."/>
            <person name="Barry K."/>
            <person name="Detter J.C."/>
            <person name="Glavina del Rio T."/>
            <person name="Hammon N."/>
            <person name="Israni S."/>
            <person name="Pitluck S."/>
            <person name="Chain P."/>
            <person name="Malfatti S."/>
            <person name="Shin M."/>
            <person name="Vergez L."/>
            <person name="Schmutz J."/>
            <person name="Larimer F."/>
            <person name="Land M."/>
            <person name="Hauser L."/>
            <person name="Kyrpides N."/>
            <person name="Kim E."/>
            <person name="LiPuma J.J."/>
            <person name="Gonzalez C.F."/>
            <person name="Konstantinidis K."/>
            <person name="Tiedje J.M."/>
            <person name="Richardson P."/>
        </authorList>
    </citation>
    <scope>NUCLEOTIDE SEQUENCE [LARGE SCALE GENOMIC DNA]</scope>
    <source>
        <strain>HI2424</strain>
    </source>
</reference>
<proteinExistence type="inferred from homology"/>
<comment type="catalytic activity">
    <reaction evidence="1">
        <text>(S)-4-amino-5-oxopentanoate = 5-aminolevulinate</text>
        <dbReference type="Rhea" id="RHEA:14265"/>
        <dbReference type="ChEBI" id="CHEBI:57501"/>
        <dbReference type="ChEBI" id="CHEBI:356416"/>
        <dbReference type="EC" id="5.4.3.8"/>
    </reaction>
</comment>
<comment type="cofactor">
    <cofactor evidence="1">
        <name>pyridoxal 5'-phosphate</name>
        <dbReference type="ChEBI" id="CHEBI:597326"/>
    </cofactor>
</comment>
<comment type="pathway">
    <text evidence="1">Porphyrin-containing compound metabolism; protoporphyrin-IX biosynthesis; 5-aminolevulinate from L-glutamyl-tRNA(Glu): step 2/2.</text>
</comment>
<comment type="subunit">
    <text evidence="1">Homodimer.</text>
</comment>
<comment type="subcellular location">
    <subcellularLocation>
        <location evidence="1">Cytoplasm</location>
    </subcellularLocation>
</comment>
<comment type="similarity">
    <text evidence="1">Belongs to the class-III pyridoxal-phosphate-dependent aminotransferase family. HemL subfamily.</text>
</comment>
<feature type="chain" id="PRO_0000300895" description="Glutamate-1-semialdehyde 2,1-aminomutase">
    <location>
        <begin position="1"/>
        <end position="427"/>
    </location>
</feature>
<feature type="modified residue" description="N6-(pyridoxal phosphate)lysine" evidence="1">
    <location>
        <position position="265"/>
    </location>
</feature>
<evidence type="ECO:0000255" key="1">
    <source>
        <dbReference type="HAMAP-Rule" id="MF_00375"/>
    </source>
</evidence>
<gene>
    <name evidence="1" type="primary">hemL</name>
    <name type="ordered locus">Bcen2424_0961</name>
</gene>
<keyword id="KW-0963">Cytoplasm</keyword>
<keyword id="KW-0413">Isomerase</keyword>
<keyword id="KW-0627">Porphyrin biosynthesis</keyword>
<keyword id="KW-0663">Pyridoxal phosphate</keyword>
<sequence>MSNNQILFERAQKTIPGGVNSPVRAFRSVGGTPRFVARAQGPYFWDADGKQYIDYIGSWGPMIVGHVHPEVLSAVQNVLADGFSFGAPTEAEIEIAEEICKLVPSIEQVRMVSSGTEATMSALRLARGFTGRSRIVKFEGCYHGHADSLLVKAGSGLLTFGNPTSAGVPADIAKHTTVLEYNNVAALEEAFGAFGDEIAAVIVEPVAGNMNLVRGTPEFLNALRALCTKHGAVLIFDEVMCGFRVALGGAQTYYGIAADLTCLGKVIGGGMPAAAFGGRRDIMAHLAPLGGVYQAGTLSGNPIAVAAGLKTLQLIQAPGFYDALTAQTKRLADGLAAEARAAGVPFAADSIGAMFGLYFAERVPGSFAEVTKSNVERFNRFFHLMLDEGVYFAPSAYEAGFVSSTHDDAVIDATLAAARRAFAALAA</sequence>
<dbReference type="EC" id="5.4.3.8" evidence="1"/>
<dbReference type="EMBL" id="CP000458">
    <property type="protein sequence ID" value="ABK07714.1"/>
    <property type="molecule type" value="Genomic_DNA"/>
</dbReference>
<dbReference type="RefSeq" id="WP_011544821.1">
    <property type="nucleotide sequence ID" value="NC_008542.1"/>
</dbReference>
<dbReference type="SMR" id="A0K5D7"/>
<dbReference type="KEGG" id="bch:Bcen2424_0961"/>
<dbReference type="HOGENOM" id="CLU_016922_1_5_4"/>
<dbReference type="UniPathway" id="UPA00251">
    <property type="reaction ID" value="UER00317"/>
</dbReference>
<dbReference type="GO" id="GO:0005737">
    <property type="term" value="C:cytoplasm"/>
    <property type="evidence" value="ECO:0007669"/>
    <property type="project" value="UniProtKB-SubCell"/>
</dbReference>
<dbReference type="GO" id="GO:0042286">
    <property type="term" value="F:glutamate-1-semialdehyde 2,1-aminomutase activity"/>
    <property type="evidence" value="ECO:0007669"/>
    <property type="project" value="UniProtKB-UniRule"/>
</dbReference>
<dbReference type="GO" id="GO:0030170">
    <property type="term" value="F:pyridoxal phosphate binding"/>
    <property type="evidence" value="ECO:0007669"/>
    <property type="project" value="InterPro"/>
</dbReference>
<dbReference type="GO" id="GO:0008483">
    <property type="term" value="F:transaminase activity"/>
    <property type="evidence" value="ECO:0007669"/>
    <property type="project" value="InterPro"/>
</dbReference>
<dbReference type="GO" id="GO:0006782">
    <property type="term" value="P:protoporphyrinogen IX biosynthetic process"/>
    <property type="evidence" value="ECO:0007669"/>
    <property type="project" value="UniProtKB-UniRule"/>
</dbReference>
<dbReference type="CDD" id="cd00610">
    <property type="entry name" value="OAT_like"/>
    <property type="match status" value="1"/>
</dbReference>
<dbReference type="FunFam" id="3.40.640.10:FF:000021">
    <property type="entry name" value="Glutamate-1-semialdehyde 2,1-aminomutase"/>
    <property type="match status" value="1"/>
</dbReference>
<dbReference type="Gene3D" id="3.90.1150.10">
    <property type="entry name" value="Aspartate Aminotransferase, domain 1"/>
    <property type="match status" value="1"/>
</dbReference>
<dbReference type="Gene3D" id="3.40.640.10">
    <property type="entry name" value="Type I PLP-dependent aspartate aminotransferase-like (Major domain)"/>
    <property type="match status" value="1"/>
</dbReference>
<dbReference type="HAMAP" id="MF_00375">
    <property type="entry name" value="HemL_aminotrans_3"/>
    <property type="match status" value="1"/>
</dbReference>
<dbReference type="InterPro" id="IPR004639">
    <property type="entry name" value="4pyrrol_synth_GluAld_NH2Trfase"/>
</dbReference>
<dbReference type="InterPro" id="IPR005814">
    <property type="entry name" value="Aminotrans_3"/>
</dbReference>
<dbReference type="InterPro" id="IPR049704">
    <property type="entry name" value="Aminotrans_3_PPA_site"/>
</dbReference>
<dbReference type="InterPro" id="IPR015424">
    <property type="entry name" value="PyrdxlP-dep_Trfase"/>
</dbReference>
<dbReference type="InterPro" id="IPR015421">
    <property type="entry name" value="PyrdxlP-dep_Trfase_major"/>
</dbReference>
<dbReference type="InterPro" id="IPR015422">
    <property type="entry name" value="PyrdxlP-dep_Trfase_small"/>
</dbReference>
<dbReference type="NCBIfam" id="TIGR00713">
    <property type="entry name" value="hemL"/>
    <property type="match status" value="1"/>
</dbReference>
<dbReference type="NCBIfam" id="NF000818">
    <property type="entry name" value="PRK00062.1"/>
    <property type="match status" value="1"/>
</dbReference>
<dbReference type="PANTHER" id="PTHR43713">
    <property type="entry name" value="GLUTAMATE-1-SEMIALDEHYDE 2,1-AMINOMUTASE"/>
    <property type="match status" value="1"/>
</dbReference>
<dbReference type="PANTHER" id="PTHR43713:SF3">
    <property type="entry name" value="GLUTAMATE-1-SEMIALDEHYDE 2,1-AMINOMUTASE 1, CHLOROPLASTIC-RELATED"/>
    <property type="match status" value="1"/>
</dbReference>
<dbReference type="Pfam" id="PF00202">
    <property type="entry name" value="Aminotran_3"/>
    <property type="match status" value="1"/>
</dbReference>
<dbReference type="SUPFAM" id="SSF53383">
    <property type="entry name" value="PLP-dependent transferases"/>
    <property type="match status" value="1"/>
</dbReference>
<dbReference type="PROSITE" id="PS00600">
    <property type="entry name" value="AA_TRANSFER_CLASS_3"/>
    <property type="match status" value="1"/>
</dbReference>